<sequence length="345" mass="36508">MPITPQEALQRTIEHREIFHDEMVGLMRQIMRGEVSDMMVAAILTGLRVKKETIGEIAGAATVMREFSRRVDVSDHQHMVDIVGTGGDGSHTFNISTCAMFVAAAGGAKVAKHGNRSVSSKSGSADALEALGAVIELQPEQVADALAQTGIGFMYAPLHHPSMKVVAPVRREMGVRTIFNILGPLTNPAGSPNILMGVFHPDLVGIQARVLQELGAERALVVWGRDGMDELSLGAGTLVGELRDGQVREYEVHPEDFGIAMSASRNLKVADAAQSRAMLLRVLDNVPGPALDIVALNAGAALYVAGLAGSIADGVLRARAVLADGSARARLDAYVAYTHQLAGQP</sequence>
<keyword id="KW-0028">Amino-acid biosynthesis</keyword>
<keyword id="KW-0057">Aromatic amino acid biosynthesis</keyword>
<keyword id="KW-0328">Glycosyltransferase</keyword>
<keyword id="KW-0460">Magnesium</keyword>
<keyword id="KW-0479">Metal-binding</keyword>
<keyword id="KW-0808">Transferase</keyword>
<keyword id="KW-0822">Tryptophan biosynthesis</keyword>
<dbReference type="EC" id="2.4.2.18" evidence="1"/>
<dbReference type="EMBL" id="AP008229">
    <property type="protein sequence ID" value="BAE70691.1"/>
    <property type="molecule type" value="Genomic_DNA"/>
</dbReference>
<dbReference type="RefSeq" id="WP_011409580.1">
    <property type="nucleotide sequence ID" value="NC_007705.1"/>
</dbReference>
<dbReference type="SMR" id="Q2NYD6"/>
<dbReference type="KEGG" id="xom:XOO3936"/>
<dbReference type="HOGENOM" id="CLU_034315_2_1_6"/>
<dbReference type="UniPathway" id="UPA00035">
    <property type="reaction ID" value="UER00041"/>
</dbReference>
<dbReference type="GO" id="GO:0005829">
    <property type="term" value="C:cytosol"/>
    <property type="evidence" value="ECO:0007669"/>
    <property type="project" value="TreeGrafter"/>
</dbReference>
<dbReference type="GO" id="GO:0004048">
    <property type="term" value="F:anthranilate phosphoribosyltransferase activity"/>
    <property type="evidence" value="ECO:0007669"/>
    <property type="project" value="UniProtKB-UniRule"/>
</dbReference>
<dbReference type="GO" id="GO:0000287">
    <property type="term" value="F:magnesium ion binding"/>
    <property type="evidence" value="ECO:0007669"/>
    <property type="project" value="UniProtKB-UniRule"/>
</dbReference>
<dbReference type="GO" id="GO:0000162">
    <property type="term" value="P:L-tryptophan biosynthetic process"/>
    <property type="evidence" value="ECO:0007669"/>
    <property type="project" value="UniProtKB-UniRule"/>
</dbReference>
<dbReference type="FunFam" id="1.20.970.10:FF:000006">
    <property type="entry name" value="Anthranilate phosphoribosyltransferase"/>
    <property type="match status" value="1"/>
</dbReference>
<dbReference type="FunFam" id="3.40.1030.10:FF:000002">
    <property type="entry name" value="Anthranilate phosphoribosyltransferase"/>
    <property type="match status" value="1"/>
</dbReference>
<dbReference type="Gene3D" id="3.40.1030.10">
    <property type="entry name" value="Nucleoside phosphorylase/phosphoribosyltransferase catalytic domain"/>
    <property type="match status" value="1"/>
</dbReference>
<dbReference type="Gene3D" id="1.20.970.10">
    <property type="entry name" value="Transferase, Pyrimidine Nucleoside Phosphorylase, Chain C"/>
    <property type="match status" value="1"/>
</dbReference>
<dbReference type="HAMAP" id="MF_00211">
    <property type="entry name" value="TrpD"/>
    <property type="match status" value="1"/>
</dbReference>
<dbReference type="InterPro" id="IPR005940">
    <property type="entry name" value="Anthranilate_Pribosyl_Tfrase"/>
</dbReference>
<dbReference type="InterPro" id="IPR000312">
    <property type="entry name" value="Glycosyl_Trfase_fam3"/>
</dbReference>
<dbReference type="InterPro" id="IPR017459">
    <property type="entry name" value="Glycosyl_Trfase_fam3_N_dom"/>
</dbReference>
<dbReference type="InterPro" id="IPR036320">
    <property type="entry name" value="Glycosyl_Trfase_fam3_N_dom_sf"/>
</dbReference>
<dbReference type="InterPro" id="IPR035902">
    <property type="entry name" value="Nuc_phospho_transferase"/>
</dbReference>
<dbReference type="NCBIfam" id="TIGR01245">
    <property type="entry name" value="trpD"/>
    <property type="match status" value="1"/>
</dbReference>
<dbReference type="PANTHER" id="PTHR43285">
    <property type="entry name" value="ANTHRANILATE PHOSPHORIBOSYLTRANSFERASE"/>
    <property type="match status" value="1"/>
</dbReference>
<dbReference type="PANTHER" id="PTHR43285:SF2">
    <property type="entry name" value="ANTHRANILATE PHOSPHORIBOSYLTRANSFERASE"/>
    <property type="match status" value="1"/>
</dbReference>
<dbReference type="Pfam" id="PF02885">
    <property type="entry name" value="Glycos_trans_3N"/>
    <property type="match status" value="1"/>
</dbReference>
<dbReference type="Pfam" id="PF00591">
    <property type="entry name" value="Glycos_transf_3"/>
    <property type="match status" value="1"/>
</dbReference>
<dbReference type="SUPFAM" id="SSF52418">
    <property type="entry name" value="Nucleoside phosphorylase/phosphoribosyltransferase catalytic domain"/>
    <property type="match status" value="1"/>
</dbReference>
<dbReference type="SUPFAM" id="SSF47648">
    <property type="entry name" value="Nucleoside phosphorylase/phosphoribosyltransferase N-terminal domain"/>
    <property type="match status" value="1"/>
</dbReference>
<feature type="chain" id="PRO_1000043080" description="Anthranilate phosphoribosyltransferase">
    <location>
        <begin position="1"/>
        <end position="345"/>
    </location>
</feature>
<feature type="binding site" evidence="1">
    <location>
        <position position="84"/>
    </location>
    <ligand>
        <name>5-phospho-alpha-D-ribose 1-diphosphate</name>
        <dbReference type="ChEBI" id="CHEBI:58017"/>
    </ligand>
</feature>
<feature type="binding site" evidence="1">
    <location>
        <position position="84"/>
    </location>
    <ligand>
        <name>anthranilate</name>
        <dbReference type="ChEBI" id="CHEBI:16567"/>
        <label>1</label>
    </ligand>
</feature>
<feature type="binding site" evidence="1">
    <location>
        <begin position="87"/>
        <end position="88"/>
    </location>
    <ligand>
        <name>5-phospho-alpha-D-ribose 1-diphosphate</name>
        <dbReference type="ChEBI" id="CHEBI:58017"/>
    </ligand>
</feature>
<feature type="binding site" evidence="1">
    <location>
        <position position="92"/>
    </location>
    <ligand>
        <name>5-phospho-alpha-D-ribose 1-diphosphate</name>
        <dbReference type="ChEBI" id="CHEBI:58017"/>
    </ligand>
</feature>
<feature type="binding site" evidence="1">
    <location>
        <begin position="94"/>
        <end position="97"/>
    </location>
    <ligand>
        <name>5-phospho-alpha-D-ribose 1-diphosphate</name>
        <dbReference type="ChEBI" id="CHEBI:58017"/>
    </ligand>
</feature>
<feature type="binding site" evidence="1">
    <location>
        <position position="96"/>
    </location>
    <ligand>
        <name>Mg(2+)</name>
        <dbReference type="ChEBI" id="CHEBI:18420"/>
        <label>1</label>
    </ligand>
</feature>
<feature type="binding site" evidence="1">
    <location>
        <begin position="112"/>
        <end position="120"/>
    </location>
    <ligand>
        <name>5-phospho-alpha-D-ribose 1-diphosphate</name>
        <dbReference type="ChEBI" id="CHEBI:58017"/>
    </ligand>
</feature>
<feature type="binding site" evidence="1">
    <location>
        <position position="115"/>
    </location>
    <ligand>
        <name>anthranilate</name>
        <dbReference type="ChEBI" id="CHEBI:16567"/>
        <label>1</label>
    </ligand>
</feature>
<feature type="binding site" evidence="1">
    <location>
        <position position="124"/>
    </location>
    <ligand>
        <name>5-phospho-alpha-D-ribose 1-diphosphate</name>
        <dbReference type="ChEBI" id="CHEBI:58017"/>
    </ligand>
</feature>
<feature type="binding site" evidence="1">
    <location>
        <position position="170"/>
    </location>
    <ligand>
        <name>anthranilate</name>
        <dbReference type="ChEBI" id="CHEBI:16567"/>
        <label>2</label>
    </ligand>
</feature>
<feature type="binding site" evidence="1">
    <location>
        <position position="229"/>
    </location>
    <ligand>
        <name>Mg(2+)</name>
        <dbReference type="ChEBI" id="CHEBI:18420"/>
        <label>2</label>
    </ligand>
</feature>
<feature type="binding site" evidence="1">
    <location>
        <position position="230"/>
    </location>
    <ligand>
        <name>Mg(2+)</name>
        <dbReference type="ChEBI" id="CHEBI:18420"/>
        <label>1</label>
    </ligand>
</feature>
<feature type="binding site" evidence="1">
    <location>
        <position position="230"/>
    </location>
    <ligand>
        <name>Mg(2+)</name>
        <dbReference type="ChEBI" id="CHEBI:18420"/>
        <label>2</label>
    </ligand>
</feature>
<gene>
    <name evidence="1" type="primary">trpD</name>
    <name type="ordered locus">XOO3936</name>
</gene>
<protein>
    <recommendedName>
        <fullName evidence="1">Anthranilate phosphoribosyltransferase</fullName>
        <ecNumber evidence="1">2.4.2.18</ecNumber>
    </recommendedName>
</protein>
<comment type="function">
    <text evidence="1">Catalyzes the transfer of the phosphoribosyl group of 5-phosphorylribose-1-pyrophosphate (PRPP) to anthranilate to yield N-(5'-phosphoribosyl)-anthranilate (PRA).</text>
</comment>
<comment type="catalytic activity">
    <reaction evidence="1">
        <text>N-(5-phospho-beta-D-ribosyl)anthranilate + diphosphate = 5-phospho-alpha-D-ribose 1-diphosphate + anthranilate</text>
        <dbReference type="Rhea" id="RHEA:11768"/>
        <dbReference type="ChEBI" id="CHEBI:16567"/>
        <dbReference type="ChEBI" id="CHEBI:18277"/>
        <dbReference type="ChEBI" id="CHEBI:33019"/>
        <dbReference type="ChEBI" id="CHEBI:58017"/>
        <dbReference type="EC" id="2.4.2.18"/>
    </reaction>
</comment>
<comment type="cofactor">
    <cofactor evidence="1">
        <name>Mg(2+)</name>
        <dbReference type="ChEBI" id="CHEBI:18420"/>
    </cofactor>
    <text evidence="1">Binds 2 magnesium ions per monomer.</text>
</comment>
<comment type="pathway">
    <text evidence="1">Amino-acid biosynthesis; L-tryptophan biosynthesis; L-tryptophan from chorismate: step 2/5.</text>
</comment>
<comment type="subunit">
    <text evidence="1">Homodimer.</text>
</comment>
<comment type="similarity">
    <text evidence="1">Belongs to the anthranilate phosphoribosyltransferase family.</text>
</comment>
<proteinExistence type="inferred from homology"/>
<organism>
    <name type="scientific">Xanthomonas oryzae pv. oryzae (strain MAFF 311018)</name>
    <dbReference type="NCBI Taxonomy" id="342109"/>
    <lineage>
        <taxon>Bacteria</taxon>
        <taxon>Pseudomonadati</taxon>
        <taxon>Pseudomonadota</taxon>
        <taxon>Gammaproteobacteria</taxon>
        <taxon>Lysobacterales</taxon>
        <taxon>Lysobacteraceae</taxon>
        <taxon>Xanthomonas</taxon>
    </lineage>
</organism>
<name>TRPD_XANOM</name>
<reference key="1">
    <citation type="journal article" date="2005" name="Jpn. Agric. Res. Q.">
        <title>Genome sequence of Xanthomonas oryzae pv. oryzae suggests contribution of large numbers of effector genes and insertion sequences to its race diversity.</title>
        <authorList>
            <person name="Ochiai H."/>
            <person name="Inoue Y."/>
            <person name="Takeya M."/>
            <person name="Sasaki A."/>
            <person name="Kaku H."/>
        </authorList>
    </citation>
    <scope>NUCLEOTIDE SEQUENCE [LARGE SCALE GENOMIC DNA]</scope>
    <source>
        <strain>MAFF 311018</strain>
    </source>
</reference>
<accession>Q2NYD6</accession>
<evidence type="ECO:0000255" key="1">
    <source>
        <dbReference type="HAMAP-Rule" id="MF_00211"/>
    </source>
</evidence>